<organism>
    <name type="scientific">Neurospora crassa (strain ATCC 24698 / 74-OR23-1A / CBS 708.71 / DSM 1257 / FGSC 987)</name>
    <dbReference type="NCBI Taxonomy" id="367110"/>
    <lineage>
        <taxon>Eukaryota</taxon>
        <taxon>Fungi</taxon>
        <taxon>Dikarya</taxon>
        <taxon>Ascomycota</taxon>
        <taxon>Pezizomycotina</taxon>
        <taxon>Sordariomycetes</taxon>
        <taxon>Sordariomycetidae</taxon>
        <taxon>Sordariales</taxon>
        <taxon>Sordariaceae</taxon>
        <taxon>Neurospora</taxon>
    </lineage>
</organism>
<accession>Q7RYN6</accession>
<dbReference type="EMBL" id="CM002238">
    <property type="protein sequence ID" value="EAA27980.1"/>
    <property type="molecule type" value="Genomic_DNA"/>
</dbReference>
<dbReference type="RefSeq" id="XP_957216.1">
    <property type="nucleotide sequence ID" value="XM_952123.2"/>
</dbReference>
<dbReference type="SMR" id="Q7RYN6"/>
<dbReference type="STRING" id="367110.Q7RYN6"/>
<dbReference type="PaxDb" id="5141-EFNCRP00000000266"/>
<dbReference type="EnsemblFungi" id="EAA27980">
    <property type="protein sequence ID" value="EAA27980"/>
    <property type="gene ID" value="NCU00092"/>
</dbReference>
<dbReference type="GeneID" id="3873379"/>
<dbReference type="KEGG" id="ncr:NCU00092"/>
<dbReference type="VEuPathDB" id="FungiDB:NCU00092"/>
<dbReference type="HOGENOM" id="CLU_066912_0_0_1"/>
<dbReference type="InParanoid" id="Q7RYN6"/>
<dbReference type="OrthoDB" id="47732at2759"/>
<dbReference type="Proteomes" id="UP000001805">
    <property type="component" value="Chromosome 3, Linkage Group III"/>
</dbReference>
<dbReference type="GO" id="GO:0005730">
    <property type="term" value="C:nucleolus"/>
    <property type="evidence" value="ECO:0007669"/>
    <property type="project" value="UniProtKB-SubCell"/>
</dbReference>
<dbReference type="GO" id="GO:0000462">
    <property type="term" value="P:maturation of SSU-rRNA from tricistronic rRNA transcript (SSU-rRNA, 5.8S rRNA, LSU-rRNA)"/>
    <property type="evidence" value="ECO:0000318"/>
    <property type="project" value="GO_Central"/>
</dbReference>
<dbReference type="InterPro" id="IPR019310">
    <property type="entry name" value="Efg1"/>
</dbReference>
<dbReference type="InterPro" id="IPR050786">
    <property type="entry name" value="EFG1_rRNA-proc"/>
</dbReference>
<dbReference type="PANTHER" id="PTHR33911">
    <property type="entry name" value="RRNA-PROCESSING PROTEIN EFG1"/>
    <property type="match status" value="1"/>
</dbReference>
<dbReference type="PANTHER" id="PTHR33911:SF1">
    <property type="entry name" value="RRNA-PROCESSING PROTEIN EFG1"/>
    <property type="match status" value="1"/>
</dbReference>
<dbReference type="Pfam" id="PF10153">
    <property type="entry name" value="Efg1"/>
    <property type="match status" value="1"/>
</dbReference>
<comment type="function">
    <text evidence="1">Involved in rRNA processing.</text>
</comment>
<comment type="subcellular location">
    <subcellularLocation>
        <location evidence="1">Nucleus</location>
        <location evidence="1">Nucleolus</location>
    </subcellularLocation>
</comment>
<comment type="similarity">
    <text evidence="4">Belongs to the EFG1 family.</text>
</comment>
<gene>
    <name type="primary">efg1</name>
    <name type="ORF">NCU00092</name>
</gene>
<proteinExistence type="inferred from homology"/>
<feature type="chain" id="PRO_0000330277" description="rRNA-processing protein efg1">
    <location>
        <begin position="1"/>
        <end position="269"/>
    </location>
</feature>
<feature type="region of interest" description="Disordered" evidence="3">
    <location>
        <begin position="1"/>
        <end position="53"/>
    </location>
</feature>
<feature type="region of interest" description="Disordered" evidence="3">
    <location>
        <begin position="177"/>
        <end position="269"/>
    </location>
</feature>
<feature type="coiled-coil region" evidence="2">
    <location>
        <begin position="52"/>
        <end position="157"/>
    </location>
</feature>
<feature type="compositionally biased region" description="Polar residues" evidence="3">
    <location>
        <begin position="14"/>
        <end position="23"/>
    </location>
</feature>
<feature type="compositionally biased region" description="Basic and acidic residues" evidence="3">
    <location>
        <begin position="202"/>
        <end position="225"/>
    </location>
</feature>
<feature type="compositionally biased region" description="Basic and acidic residues" evidence="3">
    <location>
        <begin position="240"/>
        <end position="254"/>
    </location>
</feature>
<feature type="compositionally biased region" description="Acidic residues" evidence="3">
    <location>
        <begin position="255"/>
        <end position="269"/>
    </location>
</feature>
<keyword id="KW-0175">Coiled coil</keyword>
<keyword id="KW-0539">Nucleus</keyword>
<keyword id="KW-1185">Reference proteome</keyword>
<keyword id="KW-0698">rRNA processing</keyword>
<name>EFG1P_NEUCR</name>
<evidence type="ECO:0000250" key="1"/>
<evidence type="ECO:0000255" key="2"/>
<evidence type="ECO:0000256" key="3">
    <source>
        <dbReference type="SAM" id="MobiDB-lite"/>
    </source>
</evidence>
<evidence type="ECO:0000305" key="4"/>
<reference key="1">
    <citation type="journal article" date="2003" name="Nature">
        <title>The genome sequence of the filamentous fungus Neurospora crassa.</title>
        <authorList>
            <person name="Galagan J.E."/>
            <person name="Calvo S.E."/>
            <person name="Borkovich K.A."/>
            <person name="Selker E.U."/>
            <person name="Read N.D."/>
            <person name="Jaffe D.B."/>
            <person name="FitzHugh W."/>
            <person name="Ma L.-J."/>
            <person name="Smirnov S."/>
            <person name="Purcell S."/>
            <person name="Rehman B."/>
            <person name="Elkins T."/>
            <person name="Engels R."/>
            <person name="Wang S."/>
            <person name="Nielsen C.B."/>
            <person name="Butler J."/>
            <person name="Endrizzi M."/>
            <person name="Qui D."/>
            <person name="Ianakiev P."/>
            <person name="Bell-Pedersen D."/>
            <person name="Nelson M.A."/>
            <person name="Werner-Washburne M."/>
            <person name="Selitrennikoff C.P."/>
            <person name="Kinsey J.A."/>
            <person name="Braun E.L."/>
            <person name="Zelter A."/>
            <person name="Schulte U."/>
            <person name="Kothe G.O."/>
            <person name="Jedd G."/>
            <person name="Mewes H.-W."/>
            <person name="Staben C."/>
            <person name="Marcotte E."/>
            <person name="Greenberg D."/>
            <person name="Roy A."/>
            <person name="Foley K."/>
            <person name="Naylor J."/>
            <person name="Stange-Thomann N."/>
            <person name="Barrett R."/>
            <person name="Gnerre S."/>
            <person name="Kamal M."/>
            <person name="Kamvysselis M."/>
            <person name="Mauceli E.W."/>
            <person name="Bielke C."/>
            <person name="Rudd S."/>
            <person name="Frishman D."/>
            <person name="Krystofova S."/>
            <person name="Rasmussen C."/>
            <person name="Metzenberg R.L."/>
            <person name="Perkins D.D."/>
            <person name="Kroken S."/>
            <person name="Cogoni C."/>
            <person name="Macino G."/>
            <person name="Catcheside D.E.A."/>
            <person name="Li W."/>
            <person name="Pratt R.J."/>
            <person name="Osmani S.A."/>
            <person name="DeSouza C.P.C."/>
            <person name="Glass N.L."/>
            <person name="Orbach M.J."/>
            <person name="Berglund J.A."/>
            <person name="Voelker R."/>
            <person name="Yarden O."/>
            <person name="Plamann M."/>
            <person name="Seiler S."/>
            <person name="Dunlap J.C."/>
            <person name="Radford A."/>
            <person name="Aramayo R."/>
            <person name="Natvig D.O."/>
            <person name="Alex L.A."/>
            <person name="Mannhaupt G."/>
            <person name="Ebbole D.J."/>
            <person name="Freitag M."/>
            <person name="Paulsen I."/>
            <person name="Sachs M.S."/>
            <person name="Lander E.S."/>
            <person name="Nusbaum C."/>
            <person name="Birren B.W."/>
        </authorList>
    </citation>
    <scope>NUCLEOTIDE SEQUENCE [LARGE SCALE GENOMIC DNA]</scope>
    <source>
        <strain>ATCC 24698 / 74-OR23-1A / CBS 708.71 / DSM 1257 / FGSC 987</strain>
    </source>
</reference>
<protein>
    <recommendedName>
        <fullName>rRNA-processing protein efg1</fullName>
    </recommendedName>
</protein>
<sequence>MGKRSYEEAEGSNADGQEQNQAQKRNRNPHNRFNPKNIAKRQKTTQKINDGNLSQIKKRVRAIERLLEHKNEKLPANVRNDLERELQAHKQRIVDESDRKLRSKMISKYHMVRFFERKKAMRLAKQLMKQLDETKDEAEIARLKADLHIAEVDLDYALYHPHMETYISLYPKPKDEAAEKDEKSSAAHHLHSSRPPMWTTIEKARQEGKSALEKIRDRRPERDFSKPTSKKTAKKSSSQSEERPAKGKFGKTEEESANESDDGGFFEED</sequence>